<dbReference type="EMBL" id="AF024691">
    <property type="protein sequence ID" value="AAC39088.1"/>
    <property type="molecule type" value="Genomic_DNA"/>
</dbReference>
<dbReference type="SMR" id="O61369"/>
<dbReference type="eggNOG" id="KOG2532">
    <property type="taxonomic scope" value="Eukaryota"/>
</dbReference>
<dbReference type="OrthoDB" id="2985014at2759"/>
<dbReference type="GO" id="GO:0016020">
    <property type="term" value="C:membrane"/>
    <property type="evidence" value="ECO:0007669"/>
    <property type="project" value="UniProtKB-SubCell"/>
</dbReference>
<dbReference type="GO" id="GO:0005315">
    <property type="term" value="F:phosphate transmembrane transporter activity"/>
    <property type="evidence" value="ECO:0007669"/>
    <property type="project" value="InterPro"/>
</dbReference>
<dbReference type="GO" id="GO:0015293">
    <property type="term" value="F:symporter activity"/>
    <property type="evidence" value="ECO:0007669"/>
    <property type="project" value="UniProtKB-KW"/>
</dbReference>
<dbReference type="GO" id="GO:0006820">
    <property type="term" value="P:monoatomic anion transport"/>
    <property type="evidence" value="ECO:0007669"/>
    <property type="project" value="TreeGrafter"/>
</dbReference>
<dbReference type="GO" id="GO:0035435">
    <property type="term" value="P:phosphate ion transmembrane transport"/>
    <property type="evidence" value="ECO:0007669"/>
    <property type="project" value="InterPro"/>
</dbReference>
<dbReference type="GO" id="GO:0006814">
    <property type="term" value="P:sodium ion transport"/>
    <property type="evidence" value="ECO:0007669"/>
    <property type="project" value="UniProtKB-KW"/>
</dbReference>
<dbReference type="CDD" id="cd17318">
    <property type="entry name" value="MFS_SLC17"/>
    <property type="match status" value="1"/>
</dbReference>
<dbReference type="FunFam" id="1.20.1250.20:FF:000144">
    <property type="entry name" value="Picot, isoform B"/>
    <property type="match status" value="1"/>
</dbReference>
<dbReference type="FunFam" id="1.20.1250.20:FF:000003">
    <property type="entry name" value="Solute carrier family 17 member 3"/>
    <property type="match status" value="1"/>
</dbReference>
<dbReference type="Gene3D" id="1.20.1250.20">
    <property type="entry name" value="MFS general substrate transporter like domains"/>
    <property type="match status" value="2"/>
</dbReference>
<dbReference type="InterPro" id="IPR011701">
    <property type="entry name" value="MFS"/>
</dbReference>
<dbReference type="InterPro" id="IPR020846">
    <property type="entry name" value="MFS_dom"/>
</dbReference>
<dbReference type="InterPro" id="IPR050382">
    <property type="entry name" value="MFS_Na/Anion_cotransporter"/>
</dbReference>
<dbReference type="InterPro" id="IPR036259">
    <property type="entry name" value="MFS_trans_sf"/>
</dbReference>
<dbReference type="InterPro" id="IPR004745">
    <property type="entry name" value="Pi_cotranspt"/>
</dbReference>
<dbReference type="NCBIfam" id="TIGR00894">
    <property type="entry name" value="2A0114euk"/>
    <property type="match status" value="1"/>
</dbReference>
<dbReference type="PANTHER" id="PTHR11662:SF247">
    <property type="entry name" value="MAJOR FACILITATOR SUPERFAMILY (MFS) PROFILE DOMAIN-CONTAINING PROTEIN-RELATED"/>
    <property type="match status" value="1"/>
</dbReference>
<dbReference type="PANTHER" id="PTHR11662">
    <property type="entry name" value="SOLUTE CARRIER FAMILY 17"/>
    <property type="match status" value="1"/>
</dbReference>
<dbReference type="Pfam" id="PF07690">
    <property type="entry name" value="MFS_1"/>
    <property type="match status" value="1"/>
</dbReference>
<dbReference type="SUPFAM" id="SSF103473">
    <property type="entry name" value="MFS general substrate transporter"/>
    <property type="match status" value="1"/>
</dbReference>
<dbReference type="PROSITE" id="PS50850">
    <property type="entry name" value="MFS"/>
    <property type="match status" value="1"/>
</dbReference>
<gene>
    <name type="primary">Picot</name>
</gene>
<organism>
    <name type="scientific">Drosophila ananassae</name>
    <name type="common">Fruit fly</name>
    <dbReference type="NCBI Taxonomy" id="7217"/>
    <lineage>
        <taxon>Eukaryota</taxon>
        <taxon>Metazoa</taxon>
        <taxon>Ecdysozoa</taxon>
        <taxon>Arthropoda</taxon>
        <taxon>Hexapoda</taxon>
        <taxon>Insecta</taxon>
        <taxon>Pterygota</taxon>
        <taxon>Neoptera</taxon>
        <taxon>Endopterygota</taxon>
        <taxon>Diptera</taxon>
        <taxon>Brachycera</taxon>
        <taxon>Muscomorpha</taxon>
        <taxon>Ephydroidea</taxon>
        <taxon>Drosophilidae</taxon>
        <taxon>Drosophila</taxon>
        <taxon>Sophophora</taxon>
    </lineage>
</organism>
<keyword id="KW-0406">Ion transport</keyword>
<keyword id="KW-0472">Membrane</keyword>
<keyword id="KW-0915">Sodium</keyword>
<keyword id="KW-0739">Sodium transport</keyword>
<keyword id="KW-0769">Symport</keyword>
<keyword id="KW-0812">Transmembrane</keyword>
<keyword id="KW-1133">Transmembrane helix</keyword>
<keyword id="KW-0813">Transport</keyword>
<accession>O61369</accession>
<feature type="chain" id="PRO_0000220945" description="Putative inorganic phosphate cotransporter">
    <location>
        <begin position="1"/>
        <end position="483"/>
    </location>
</feature>
<feature type="transmembrane region" description="Helical" evidence="1">
    <location>
        <begin position="64"/>
        <end position="84"/>
    </location>
</feature>
<feature type="transmembrane region" description="Helical" evidence="1">
    <location>
        <begin position="90"/>
        <end position="110"/>
    </location>
</feature>
<feature type="transmembrane region" description="Helical" evidence="1">
    <location>
        <begin position="187"/>
        <end position="207"/>
    </location>
</feature>
<feature type="transmembrane region" description="Helical" evidence="1">
    <location>
        <begin position="292"/>
        <end position="312"/>
    </location>
</feature>
<feature type="transmembrane region" description="Helical" evidence="1">
    <location>
        <begin position="349"/>
        <end position="369"/>
    </location>
</feature>
<feature type="transmembrane region" description="Helical" evidence="1">
    <location>
        <begin position="383"/>
        <end position="403"/>
    </location>
</feature>
<feature type="transmembrane region" description="Helical" evidence="1">
    <location>
        <begin position="420"/>
        <end position="440"/>
    </location>
</feature>
<feature type="region of interest" description="Disordered" evidence="2">
    <location>
        <begin position="447"/>
        <end position="483"/>
    </location>
</feature>
<feature type="compositionally biased region" description="Polar residues" evidence="2">
    <location>
        <begin position="460"/>
        <end position="483"/>
    </location>
</feature>
<proteinExistence type="inferred from homology"/>
<name>PICO_DROAN</name>
<sequence length="483" mass="52885">MLFLGMANAYVMRTNMSVAIVAMVNHTAIKSGEEEYDDECGDRDIPIDDSQDGEFPWNAALQGYILSSFFYGYVITQIPFGILAKKYGSLRFLGYGMLINSVFAFLVPVAAREGGVWGLCAVRFIQGLGEGPIVPCTHAMLAKWIPPNERSRMGAAVYAGAQFGTIISMPLSGLLAEYGFDGGWPSIFYVFGIVGTVWSIAFLIFVYEDPSTHPKIDEREKKYINESLWGTDVIKSPPIPFKSIVKSLPFYAILFAHMGHNYGYETLMTELPTYMKQVLRFSLKSNGLLSSLPYLAMWLLSMFISVIADWMISSKRFSLTATRKIINSIGQYGPGLALIAASYTGCDRALTLAILTIGVGLNGGIYSGFKINHLDLTPRFAGFLMSITNCSANLAGLLAPIAAGNLISDPSKPVMGQWQIVFFIAAFVYIICGTFYNIFGSGERQFWDNPSEDEQKPALESSSTTNPPRLSNGSSAPRAISSS</sequence>
<evidence type="ECO:0000255" key="1"/>
<evidence type="ECO:0000256" key="2">
    <source>
        <dbReference type="SAM" id="MobiDB-lite"/>
    </source>
</evidence>
<evidence type="ECO:0000305" key="3"/>
<protein>
    <recommendedName>
        <fullName>Putative inorganic phosphate cotransporter</fullName>
    </recommendedName>
</protein>
<comment type="function">
    <text>May be an inorganic phosphate cotransporter.</text>
</comment>
<comment type="subcellular location">
    <subcellularLocation>
        <location evidence="3">Membrane</location>
        <topology evidence="3">Multi-pass membrane protein</topology>
    </subcellularLocation>
</comment>
<comment type="similarity">
    <text evidence="3">Belongs to the major facilitator superfamily. Sodium/anion cotransporter family.</text>
</comment>
<reference key="1">
    <citation type="submission" date="1997-09" db="EMBL/GenBank/DDBJ databases">
        <authorList>
            <person name="Da Lage J.-L."/>
            <person name="Alland C."/>
        </authorList>
    </citation>
    <scope>NUCLEOTIDE SEQUENCE [GENOMIC DNA]</scope>
    <source>
        <strain>Tai 13-1610</strain>
    </source>
</reference>